<sequence length="551" mass="62407">MSSEQQNEADSKPAVIPQCFKIENQYETFSRLSETSTPGVVPSVSTLWRLLFELQKMIECEPSCVEYFRQRKEELESHVDSEIETSKDESSVNKVEEKVEEFKEDNVEQEIKQKRSLSESPQESMLEKVSKKPKVSEAHNEEISPENVETIENELDLPVKGKDEQTTGLVYKNANDLLTGSLLSFIVDDSFSYEQKKKLLCVDSFPTSDVRSLVAGTPATDDFSHNKPNNQISISTFYSSLDPYFRAFNDDDIAFLKKGFDVSSSYNIPPLGERYYDLTPEDEMTNLCANSIYQNLQTSAQGSLEAFNEADTVSEEVRCGPLTERLMASLIPCYTQNDEEQKPSIAVGEFAETDSGSEKSKIGTSIDGIESGNNEYTEQPDIQESSLSICEDRLRYTLKQLGILYDGDVDWSKRQDDEISATLRSLNARLKVVSDENEKMRNALLQMLPEEMAFQEFQNVMDDLDKQIEQAYVKRNRSLKVKKKRIVTDKIGSSATSGSFPVIKSLMDKRSMWLEKLQPLFQDKLTQHLGSPTSIFNDLSDHTTSNYSTSV</sequence>
<reference key="1">
    <citation type="submission" date="2001-02" db="EMBL/GenBank/DDBJ databases">
        <title>The studies of the kinesin-associated proteins in Schizosaccharomyces pombe.</title>
        <authorList>
            <person name="Jeong J.W."/>
            <person name="Kim H.B."/>
        </authorList>
    </citation>
    <scope>NUCLEOTIDE SEQUENCE [MRNA]</scope>
    <source>
        <strain>972 / ATCC 24843</strain>
    </source>
</reference>
<reference key="2">
    <citation type="journal article" date="2002" name="Nature">
        <title>The genome sequence of Schizosaccharomyces pombe.</title>
        <authorList>
            <person name="Wood V."/>
            <person name="Gwilliam R."/>
            <person name="Rajandream M.A."/>
            <person name="Lyne M.H."/>
            <person name="Lyne R."/>
            <person name="Stewart A."/>
            <person name="Sgouros J.G."/>
            <person name="Peat N."/>
            <person name="Hayles J."/>
            <person name="Baker S.G."/>
            <person name="Basham D."/>
            <person name="Bowman S."/>
            <person name="Brooks K."/>
            <person name="Brown D."/>
            <person name="Brown S."/>
            <person name="Chillingworth T."/>
            <person name="Churcher C.M."/>
            <person name="Collins M."/>
            <person name="Connor R."/>
            <person name="Cronin A."/>
            <person name="Davis P."/>
            <person name="Feltwell T."/>
            <person name="Fraser A."/>
            <person name="Gentles S."/>
            <person name="Goble A."/>
            <person name="Hamlin N."/>
            <person name="Harris D.E."/>
            <person name="Hidalgo J."/>
            <person name="Hodgson G."/>
            <person name="Holroyd S."/>
            <person name="Hornsby T."/>
            <person name="Howarth S."/>
            <person name="Huckle E.J."/>
            <person name="Hunt S."/>
            <person name="Jagels K."/>
            <person name="James K.D."/>
            <person name="Jones L."/>
            <person name="Jones M."/>
            <person name="Leather S."/>
            <person name="McDonald S."/>
            <person name="McLean J."/>
            <person name="Mooney P."/>
            <person name="Moule S."/>
            <person name="Mungall K.L."/>
            <person name="Murphy L.D."/>
            <person name="Niblett D."/>
            <person name="Odell C."/>
            <person name="Oliver K."/>
            <person name="O'Neil S."/>
            <person name="Pearson D."/>
            <person name="Quail M.A."/>
            <person name="Rabbinowitsch E."/>
            <person name="Rutherford K.M."/>
            <person name="Rutter S."/>
            <person name="Saunders D."/>
            <person name="Seeger K."/>
            <person name="Sharp S."/>
            <person name="Skelton J."/>
            <person name="Simmonds M.N."/>
            <person name="Squares R."/>
            <person name="Squares S."/>
            <person name="Stevens K."/>
            <person name="Taylor K."/>
            <person name="Taylor R.G."/>
            <person name="Tivey A."/>
            <person name="Walsh S.V."/>
            <person name="Warren T."/>
            <person name="Whitehead S."/>
            <person name="Woodward J.R."/>
            <person name="Volckaert G."/>
            <person name="Aert R."/>
            <person name="Robben J."/>
            <person name="Grymonprez B."/>
            <person name="Weltjens I."/>
            <person name="Vanstreels E."/>
            <person name="Rieger M."/>
            <person name="Schaefer M."/>
            <person name="Mueller-Auer S."/>
            <person name="Gabel C."/>
            <person name="Fuchs M."/>
            <person name="Duesterhoeft A."/>
            <person name="Fritzc C."/>
            <person name="Holzer E."/>
            <person name="Moestl D."/>
            <person name="Hilbert H."/>
            <person name="Borzym K."/>
            <person name="Langer I."/>
            <person name="Beck A."/>
            <person name="Lehrach H."/>
            <person name="Reinhardt R."/>
            <person name="Pohl T.M."/>
            <person name="Eger P."/>
            <person name="Zimmermann W."/>
            <person name="Wedler H."/>
            <person name="Wambutt R."/>
            <person name="Purnelle B."/>
            <person name="Goffeau A."/>
            <person name="Cadieu E."/>
            <person name="Dreano S."/>
            <person name="Gloux S."/>
            <person name="Lelaure V."/>
            <person name="Mottier S."/>
            <person name="Galibert F."/>
            <person name="Aves S.J."/>
            <person name="Xiang Z."/>
            <person name="Hunt C."/>
            <person name="Moore K."/>
            <person name="Hurst S.M."/>
            <person name="Lucas M."/>
            <person name="Rochet M."/>
            <person name="Gaillardin C."/>
            <person name="Tallada V.A."/>
            <person name="Garzon A."/>
            <person name="Thode G."/>
            <person name="Daga R.R."/>
            <person name="Cruzado L."/>
            <person name="Jimenez J."/>
            <person name="Sanchez M."/>
            <person name="del Rey F."/>
            <person name="Benito J."/>
            <person name="Dominguez A."/>
            <person name="Revuelta J.L."/>
            <person name="Moreno S."/>
            <person name="Armstrong J."/>
            <person name="Forsburg S.L."/>
            <person name="Cerutti L."/>
            <person name="Lowe T."/>
            <person name="McCombie W.R."/>
            <person name="Paulsen I."/>
            <person name="Potashkin J."/>
            <person name="Shpakovski G.V."/>
            <person name="Ussery D."/>
            <person name="Barrell B.G."/>
            <person name="Nurse P."/>
        </authorList>
    </citation>
    <scope>NUCLEOTIDE SEQUENCE [LARGE SCALE GENOMIC DNA]</scope>
    <source>
        <strain>972 / ATCC 24843</strain>
    </source>
</reference>
<reference key="3">
    <citation type="journal article" date="2006" name="Nat. Biotechnol.">
        <title>ORFeome cloning and global analysis of protein localization in the fission yeast Schizosaccharomyces pombe.</title>
        <authorList>
            <person name="Matsuyama A."/>
            <person name="Arai R."/>
            <person name="Yashiroda Y."/>
            <person name="Shirai A."/>
            <person name="Kamata A."/>
            <person name="Sekido S."/>
            <person name="Kobayashi Y."/>
            <person name="Hashimoto A."/>
            <person name="Hamamoto M."/>
            <person name="Hiraoka Y."/>
            <person name="Horinouchi S."/>
            <person name="Yoshida M."/>
        </authorList>
    </citation>
    <scope>SUBCELLULAR LOCATION [LARGE SCALE ANALYSIS]</scope>
</reference>
<reference key="4">
    <citation type="journal article" date="2008" name="Genes Dev.">
        <title>The S. pombe SAGA complex controls the switch from proliferation to sexual differentiation through the opposing roles of its subunits Gcn5 and Spt8.</title>
        <authorList>
            <person name="Helmlinger D."/>
            <person name="Marguerat S."/>
            <person name="Villen J."/>
            <person name="Gygi S.P."/>
            <person name="Bahler J."/>
            <person name="Winston F."/>
        </authorList>
    </citation>
    <scope>IDENTIFICATION IN THE SAGA COMPLEX</scope>
    <scope>IDENTIFICATION BY MASS SPECTROMETRY</scope>
    <scope>FUNCTION</scope>
</reference>
<reference key="5">
    <citation type="journal article" date="2008" name="J. Proteome Res.">
        <title>Phosphoproteome analysis of fission yeast.</title>
        <authorList>
            <person name="Wilson-Grady J.T."/>
            <person name="Villen J."/>
            <person name="Gygi S.P."/>
        </authorList>
    </citation>
    <scope>PHOSPHORYLATION [LARGE SCALE ANALYSIS] AT SER-120 AND SER-144</scope>
    <scope>IDENTIFICATION BY MASS SPECTROMETRY</scope>
</reference>
<proteinExistence type="evidence at protein level"/>
<name>NGG1_SCHPO</name>
<comment type="function">
    <text evidence="1 6">Component of the transcription coactivator SAGA complex. SAGA acts as a general cofactor required for essentially all RNA polymerase II transcription. At the promoters, SAGA is required for transcription pre-initiation complex (PIC) recruitment. It influences RNA polymerase II transcriptional activity through different activities such as TBP interaction (via core/TAF module) and promoter selectivity, interaction with transcription activators (via Tra1/SPT module), and chromatin modification through histone acetylation (via HAT module) and deubiquitination (via DUB module). SAGA preferentially acetylates histones H3 (to form H3K9ac, H3K14ac, H3K18ac and H3K23ac) and H2B and deubiquitinates histone H2B. SAGA interacts with DNA via upstream activating sequences (UASs) (By similarity). As part of the HAT module, involved in negative regulation of sexual differentiation in nutrient-rich conditions (PubMed:19056896).</text>
</comment>
<comment type="subunit">
    <text evidence="1 6">Component of the 1.8 MDa SAGA (Spt-Ada-Gcn5 acetyltransferase) complex, which is composed of 19 subunits tra1, spt7, taf5, ngg1/ada3, sgf73, spt20, spt8, taf12, taf6, hfi1/ada1, ubp8, gcn5, ada2, spt3, sgf29, taf10, taf9, sgf11 and sus1 (PubMed:19056896). The SAGA complex is composed of 4 modules, namely the HAT (histone acetyltransferase) module (gcn5, ada2, ngg1/ada3 and sgf29), the DUB (deubiquitinating) module (ubp8, sgf11, sgf73 and sus1), the core or TAF (TBP-associated factor) module (taf5, taf6, taf9, taf10 and taf12), and the Tra1 or SPT (Suppressor of Ty) module (tra1, hfi1/ada1, spt3, spt7, spt8 and spt20). The Tra1/SPT module binds activators, the core module recruits TBP (TATA-binding protein), the HAT module contains the histone H3 acetyltransferase gcn5, and the DUB module comprises the histone H2B deubiquitinase ubp8 (By similarity).</text>
</comment>
<comment type="subcellular location">
    <subcellularLocation>
        <location evidence="4">Nucleus</location>
    </subcellularLocation>
</comment>
<comment type="similarity">
    <text evidence="8">Belongs to the NGG1 family.</text>
</comment>
<organism>
    <name type="scientific">Schizosaccharomyces pombe (strain 972 / ATCC 24843)</name>
    <name type="common">Fission yeast</name>
    <dbReference type="NCBI Taxonomy" id="284812"/>
    <lineage>
        <taxon>Eukaryota</taxon>
        <taxon>Fungi</taxon>
        <taxon>Dikarya</taxon>
        <taxon>Ascomycota</taxon>
        <taxon>Taphrinomycotina</taxon>
        <taxon>Schizosaccharomycetes</taxon>
        <taxon>Schizosaccharomycetales</taxon>
        <taxon>Schizosaccharomycetaceae</taxon>
        <taxon>Schizosaccharomyces</taxon>
    </lineage>
</organism>
<feature type="chain" id="PRO_0000353803" description="SAGA complex subunit Ngg1">
    <location>
        <begin position="1"/>
        <end position="551"/>
    </location>
</feature>
<feature type="region of interest" description="Disordered" evidence="3">
    <location>
        <begin position="106"/>
        <end position="144"/>
    </location>
</feature>
<feature type="region of interest" description="Disordered" evidence="3">
    <location>
        <begin position="351"/>
        <end position="383"/>
    </location>
</feature>
<feature type="coiled-coil region" evidence="2">
    <location>
        <begin position="417"/>
        <end position="476"/>
    </location>
</feature>
<feature type="compositionally biased region" description="Basic and acidic residues" evidence="3">
    <location>
        <begin position="106"/>
        <end position="117"/>
    </location>
</feature>
<feature type="compositionally biased region" description="Basic and acidic residues" evidence="3">
    <location>
        <begin position="125"/>
        <end position="142"/>
    </location>
</feature>
<feature type="compositionally biased region" description="Polar residues" evidence="3">
    <location>
        <begin position="371"/>
        <end position="383"/>
    </location>
</feature>
<feature type="modified residue" description="Phosphoserine" evidence="5">
    <location>
        <position position="120"/>
    </location>
</feature>
<feature type="modified residue" description="Phosphoserine" evidence="5">
    <location>
        <position position="144"/>
    </location>
</feature>
<dbReference type="EMBL" id="AF351206">
    <property type="protein sequence ID" value="AAK17897.1"/>
    <property type="molecule type" value="mRNA"/>
</dbReference>
<dbReference type="EMBL" id="CU329671">
    <property type="protein sequence ID" value="CAB57939.1"/>
    <property type="molecule type" value="Genomic_DNA"/>
</dbReference>
<dbReference type="PIR" id="T40053">
    <property type="entry name" value="T40053"/>
</dbReference>
<dbReference type="RefSeq" id="NP_595671.1">
    <property type="nucleotide sequence ID" value="NM_001021566.2"/>
</dbReference>
<dbReference type="SMR" id="Q9USU8"/>
<dbReference type="BioGRID" id="276964">
    <property type="interactions" value="340"/>
</dbReference>
<dbReference type="FunCoup" id="Q9USU8">
    <property type="interactions" value="47"/>
</dbReference>
<dbReference type="IntAct" id="Q9USU8">
    <property type="interactions" value="2"/>
</dbReference>
<dbReference type="MINT" id="Q9USU8"/>
<dbReference type="STRING" id="284812.Q9USU8"/>
<dbReference type="iPTMnet" id="Q9USU8"/>
<dbReference type="PaxDb" id="4896-SPBC28F2.10c.1"/>
<dbReference type="EnsemblFungi" id="SPBC28F2.10c.1">
    <property type="protein sequence ID" value="SPBC28F2.10c.1:pep"/>
    <property type="gene ID" value="SPBC28F2.10c"/>
</dbReference>
<dbReference type="GeneID" id="2540436"/>
<dbReference type="KEGG" id="spo:2540436"/>
<dbReference type="PomBase" id="SPBC28F2.10c">
    <property type="gene designation" value="ngg1"/>
</dbReference>
<dbReference type="VEuPathDB" id="FungiDB:SPBC28F2.10c"/>
<dbReference type="eggNOG" id="KOG4191">
    <property type="taxonomic scope" value="Eukaryota"/>
</dbReference>
<dbReference type="HOGENOM" id="CLU_457950_0_0_1"/>
<dbReference type="InParanoid" id="Q9USU8"/>
<dbReference type="OMA" id="EMAFQEF"/>
<dbReference type="PhylomeDB" id="Q9USU8"/>
<dbReference type="Reactome" id="R-SPO-5689880">
    <property type="pathway name" value="Ub-specific processing proteases"/>
</dbReference>
<dbReference type="PRO" id="PR:Q9USU8"/>
<dbReference type="Proteomes" id="UP000002485">
    <property type="component" value="Chromosome II"/>
</dbReference>
<dbReference type="GO" id="GO:0005634">
    <property type="term" value="C:nucleus"/>
    <property type="evidence" value="ECO:0007005"/>
    <property type="project" value="PomBase"/>
</dbReference>
<dbReference type="GO" id="GO:0000124">
    <property type="term" value="C:SAGA complex"/>
    <property type="evidence" value="ECO:0000314"/>
    <property type="project" value="PomBase"/>
</dbReference>
<dbReference type="GO" id="GO:0003713">
    <property type="term" value="F:transcription coactivator activity"/>
    <property type="evidence" value="ECO:0000318"/>
    <property type="project" value="GO_Central"/>
</dbReference>
<dbReference type="GO" id="GO:0006357">
    <property type="term" value="P:regulation of transcription by RNA polymerase II"/>
    <property type="evidence" value="ECO:0000315"/>
    <property type="project" value="PomBase"/>
</dbReference>
<dbReference type="GO" id="GO:0045815">
    <property type="term" value="P:transcription initiation-coupled chromatin remodeling"/>
    <property type="evidence" value="ECO:0000305"/>
    <property type="project" value="PomBase"/>
</dbReference>
<dbReference type="InterPro" id="IPR019340">
    <property type="entry name" value="Histone_AcTrfase_su3"/>
</dbReference>
<dbReference type="PANTHER" id="PTHR13556:SF2">
    <property type="entry name" value="TRANSCRIPTIONAL ADAPTER 3"/>
    <property type="match status" value="1"/>
</dbReference>
<dbReference type="PANTHER" id="PTHR13556">
    <property type="entry name" value="TRANSCRIPTIONAL ADAPTER 3-RELATED"/>
    <property type="match status" value="1"/>
</dbReference>
<dbReference type="Pfam" id="PF10198">
    <property type="entry name" value="Ada3"/>
    <property type="match status" value="1"/>
</dbReference>
<evidence type="ECO:0000250" key="1">
    <source>
        <dbReference type="UniProtKB" id="P32494"/>
    </source>
</evidence>
<evidence type="ECO:0000255" key="2"/>
<evidence type="ECO:0000256" key="3">
    <source>
        <dbReference type="SAM" id="MobiDB-lite"/>
    </source>
</evidence>
<evidence type="ECO:0000269" key="4">
    <source>
    </source>
</evidence>
<evidence type="ECO:0000269" key="5">
    <source>
    </source>
</evidence>
<evidence type="ECO:0000269" key="6">
    <source>
    </source>
</evidence>
<evidence type="ECO:0000303" key="7">
    <source ref="1"/>
</evidence>
<evidence type="ECO:0000305" key="8"/>
<gene>
    <name type="primary">ngg1</name>
    <name type="synonym">ada3</name>
    <name evidence="7" type="synonym">kap1</name>
    <name type="ORF">SPBC28F2.10c</name>
</gene>
<keyword id="KW-0156">Chromatin regulator</keyword>
<keyword id="KW-0175">Coiled coil</keyword>
<keyword id="KW-0539">Nucleus</keyword>
<keyword id="KW-0597">Phosphoprotein</keyword>
<keyword id="KW-1185">Reference proteome</keyword>
<keyword id="KW-0804">Transcription</keyword>
<keyword id="KW-0805">Transcription regulation</keyword>
<accession>Q9USU8</accession>
<protein>
    <recommendedName>
        <fullName>SAGA complex subunit Ngg1</fullName>
    </recommendedName>
    <alternativeName>
        <fullName>Chromatin-remodeling complexes subunit ngg1</fullName>
    </alternativeName>
    <alternativeName>
        <fullName>Kinesin-associated protein 1</fullName>
    </alternativeName>
</protein>